<gene>
    <name type="primary">COL5A3</name>
</gene>
<proteinExistence type="evidence at protein level"/>
<evidence type="ECO:0000255" key="1"/>
<evidence type="ECO:0000255" key="2">
    <source>
        <dbReference type="PROSITE-ProRule" id="PRU00793"/>
    </source>
</evidence>
<evidence type="ECO:0000256" key="3">
    <source>
        <dbReference type="SAM" id="MobiDB-lite"/>
    </source>
</evidence>
<evidence type="ECO:0000269" key="4">
    <source>
    </source>
</evidence>
<evidence type="ECO:0000269" key="5">
    <source>
    </source>
</evidence>
<evidence type="ECO:0000269" key="6">
    <source>
    </source>
</evidence>
<evidence type="ECO:0000269" key="7">
    <source>
    </source>
</evidence>
<evidence type="ECO:0000305" key="8"/>
<protein>
    <recommendedName>
        <fullName>Collagen alpha-3(V) chain</fullName>
    </recommendedName>
</protein>
<accession>P25940</accession>
<accession>Q9NZQ6</accession>
<reference key="1">
    <citation type="journal article" date="2000" name="J. Biol. Chem.">
        <title>The pro-alpha3 (V) collagen chain. Complete primary structure, expression domains in adult and developing tissues, and comparison to the structures and expression domains of the other types V and XI procollagen chains.</title>
        <authorList>
            <person name="Imamura Y."/>
            <person name="Scott I.C."/>
            <person name="Greenspan D.S."/>
        </authorList>
    </citation>
    <scope>NUCLEOTIDE SEQUENCE [MRNA]</scope>
    <scope>VARIANT GLY-322</scope>
    <source>
        <tissue>Heart</tissue>
        <tissue>Placenta</tissue>
    </source>
</reference>
<reference key="2">
    <citation type="journal article" date="2004" name="Nature">
        <title>The DNA sequence and biology of human chromosome 19.</title>
        <authorList>
            <person name="Grimwood J."/>
            <person name="Gordon L.A."/>
            <person name="Olsen A.S."/>
            <person name="Terry A."/>
            <person name="Schmutz J."/>
            <person name="Lamerdin J.E."/>
            <person name="Hellsten U."/>
            <person name="Goodstein D."/>
            <person name="Couronne O."/>
            <person name="Tran-Gyamfi M."/>
            <person name="Aerts A."/>
            <person name="Altherr M."/>
            <person name="Ashworth L."/>
            <person name="Bajorek E."/>
            <person name="Black S."/>
            <person name="Branscomb E."/>
            <person name="Caenepeel S."/>
            <person name="Carrano A.V."/>
            <person name="Caoile C."/>
            <person name="Chan Y.M."/>
            <person name="Christensen M."/>
            <person name="Cleland C.A."/>
            <person name="Copeland A."/>
            <person name="Dalin E."/>
            <person name="Dehal P."/>
            <person name="Denys M."/>
            <person name="Detter J.C."/>
            <person name="Escobar J."/>
            <person name="Flowers D."/>
            <person name="Fotopulos D."/>
            <person name="Garcia C."/>
            <person name="Georgescu A.M."/>
            <person name="Glavina T."/>
            <person name="Gomez M."/>
            <person name="Gonzales E."/>
            <person name="Groza M."/>
            <person name="Hammon N."/>
            <person name="Hawkins T."/>
            <person name="Haydu L."/>
            <person name="Ho I."/>
            <person name="Huang W."/>
            <person name="Israni S."/>
            <person name="Jett J."/>
            <person name="Kadner K."/>
            <person name="Kimball H."/>
            <person name="Kobayashi A."/>
            <person name="Larionov V."/>
            <person name="Leem S.-H."/>
            <person name="Lopez F."/>
            <person name="Lou Y."/>
            <person name="Lowry S."/>
            <person name="Malfatti S."/>
            <person name="Martinez D."/>
            <person name="McCready P.M."/>
            <person name="Medina C."/>
            <person name="Morgan J."/>
            <person name="Nelson K."/>
            <person name="Nolan M."/>
            <person name="Ovcharenko I."/>
            <person name="Pitluck S."/>
            <person name="Pollard M."/>
            <person name="Popkie A.P."/>
            <person name="Predki P."/>
            <person name="Quan G."/>
            <person name="Ramirez L."/>
            <person name="Rash S."/>
            <person name="Retterer J."/>
            <person name="Rodriguez A."/>
            <person name="Rogers S."/>
            <person name="Salamov A."/>
            <person name="Salazar A."/>
            <person name="She X."/>
            <person name="Smith D."/>
            <person name="Slezak T."/>
            <person name="Solovyev V."/>
            <person name="Thayer N."/>
            <person name="Tice H."/>
            <person name="Tsai M."/>
            <person name="Ustaszewska A."/>
            <person name="Vo N."/>
            <person name="Wagner M."/>
            <person name="Wheeler J."/>
            <person name="Wu K."/>
            <person name="Xie G."/>
            <person name="Yang J."/>
            <person name="Dubchak I."/>
            <person name="Furey T.S."/>
            <person name="DeJong P."/>
            <person name="Dickson M."/>
            <person name="Gordon D."/>
            <person name="Eichler E.E."/>
            <person name="Pennacchio L.A."/>
            <person name="Richardson P."/>
            <person name="Stubbs L."/>
            <person name="Rokhsar D.S."/>
            <person name="Myers R.M."/>
            <person name="Rubin E.M."/>
            <person name="Lucas S.M."/>
        </authorList>
    </citation>
    <scope>NUCLEOTIDE SEQUENCE [LARGE SCALE GENOMIC DNA]</scope>
</reference>
<reference key="3">
    <citation type="journal article" date="1992" name="Biol. Chem. Hoppe-Seyler">
        <title>Isolation of the alpha 3-chain of human type V collagen and characterization by partial sequencing.</title>
        <authorList>
            <person name="Mann K."/>
        </authorList>
    </citation>
    <scope>PRELIMINARY PROTEIN SEQUENCE OF 479-564; 665-709; 723-758; 787-816; 922-1008; 1054-1088; 1248-1287 AND 1313-1334</scope>
    <source>
        <tissue>Placenta</tissue>
    </source>
</reference>
<reference key="4">
    <citation type="journal article" date="2009" name="J. Proteome Res.">
        <title>Glycoproteomics analysis of human liver tissue by combination of multiple enzyme digestion and hydrazide chemistry.</title>
        <authorList>
            <person name="Chen R."/>
            <person name="Jiang X."/>
            <person name="Sun D."/>
            <person name="Han G."/>
            <person name="Wang F."/>
            <person name="Ye M."/>
            <person name="Wang L."/>
            <person name="Zou H."/>
        </authorList>
    </citation>
    <scope>GLYCOSYLATION [LARGE SCALE ANALYSIS] AT ASN-102 AND ASN-141</scope>
    <source>
        <tissue>Liver</tissue>
    </source>
</reference>
<reference key="5">
    <citation type="journal article" date="2022" name="J. Proteins Proteom.">
        <title>Mass spectrometric analysis of chondroitin sulfate-linked peptides.</title>
        <authorList>
            <person name="Ramarajan M.G."/>
            <person name="Saraswat M."/>
            <person name="Budhraja R."/>
            <person name="Garapati K."/>
            <person name="Raymond K."/>
            <person name="Pandey A."/>
        </authorList>
    </citation>
    <scope>TISSUE SPECIFICITY</scope>
    <scope>GLYCOSYLATION AT SER-349</scope>
</reference>
<reference key="6">
    <citation type="journal article" date="2023" name="Mol. Cell. Proteomics">
        <title>Mapping the Human Chondroitin Sulfate Glycoproteome Reveals an Unexpected Correlation Between Glycan Sulfation and Attachment Site Characteristics.</title>
        <authorList>
            <person name="Noborn F."/>
            <person name="Nilsson J."/>
            <person name="Sihlbom C."/>
            <person name="Nikpour M."/>
            <person name="Kjellen L."/>
            <person name="Larson G."/>
        </authorList>
    </citation>
    <scope>SUBCELLULAR LOCATION</scope>
    <scope>TISSUE SPECIFICITY</scope>
    <scope>GLYCOSYLATION AT SER-349</scope>
</reference>
<keyword id="KW-0176">Collagen</keyword>
<keyword id="KW-0903">Direct protein sequencing</keyword>
<keyword id="KW-1015">Disulfide bond</keyword>
<keyword id="KW-0272">Extracellular matrix</keyword>
<keyword id="KW-0325">Glycoprotein</keyword>
<keyword id="KW-0379">Hydroxylation</keyword>
<keyword id="KW-0654">Proteoglycan</keyword>
<keyword id="KW-1267">Proteomics identification</keyword>
<keyword id="KW-1185">Reference proteome</keyword>
<keyword id="KW-0677">Repeat</keyword>
<keyword id="KW-0964">Secreted</keyword>
<keyword id="KW-0732">Signal</keyword>
<feature type="signal peptide" evidence="1">
    <location>
        <begin position="1"/>
        <end position="29"/>
    </location>
</feature>
<feature type="chain" id="PRO_0000005845" description="Collagen alpha-3(V) chain">
    <location>
        <begin position="30"/>
        <end position="1745"/>
    </location>
</feature>
<feature type="domain" description="Laminin G-like">
    <location>
        <begin position="62"/>
        <end position="224"/>
    </location>
</feature>
<feature type="domain" description="Collagen-like 1">
    <location>
        <begin position="391"/>
        <end position="440"/>
    </location>
</feature>
<feature type="domain" description="Collagen-like 2">
    <location>
        <begin position="482"/>
        <end position="538"/>
    </location>
</feature>
<feature type="domain" description="Collagen-like 3">
    <location>
        <begin position="824"/>
        <end position="877"/>
    </location>
</feature>
<feature type="domain" description="Collagen-like 4">
    <location>
        <begin position="905"/>
        <end position="950"/>
    </location>
</feature>
<feature type="domain" description="Collagen-like 5">
    <location>
        <begin position="951"/>
        <end position="989"/>
    </location>
</feature>
<feature type="domain" description="Collagen-like 6">
    <location>
        <begin position="1430"/>
        <end position="1488"/>
    </location>
</feature>
<feature type="domain" description="Fibrillar collagen NC1" evidence="2">
    <location>
        <begin position="1514"/>
        <end position="1744"/>
    </location>
</feature>
<feature type="region of interest" description="Nonhelical region">
    <location>
        <begin position="211"/>
        <end position="391"/>
    </location>
</feature>
<feature type="region of interest" description="Disordered" evidence="3">
    <location>
        <begin position="230"/>
        <end position="304"/>
    </location>
</feature>
<feature type="region of interest" description="Disordered" evidence="3">
    <location>
        <begin position="322"/>
        <end position="362"/>
    </location>
</feature>
<feature type="region of interest" description="Disordered" evidence="3">
    <location>
        <begin position="387"/>
        <end position="439"/>
    </location>
</feature>
<feature type="region of interest" description="Triple-helical region">
    <location>
        <begin position="392"/>
        <end position="1489"/>
    </location>
</feature>
<feature type="region of interest" description="Disordered" evidence="3">
    <location>
        <begin position="476"/>
        <end position="1492"/>
    </location>
</feature>
<feature type="compositionally biased region" description="Basic residues" evidence="3">
    <location>
        <begin position="244"/>
        <end position="267"/>
    </location>
</feature>
<feature type="compositionally biased region" description="Pro residues" evidence="3">
    <location>
        <begin position="406"/>
        <end position="424"/>
    </location>
</feature>
<feature type="compositionally biased region" description="Low complexity" evidence="3">
    <location>
        <begin position="426"/>
        <end position="439"/>
    </location>
</feature>
<feature type="compositionally biased region" description="Low complexity" evidence="3">
    <location>
        <begin position="489"/>
        <end position="499"/>
    </location>
</feature>
<feature type="compositionally biased region" description="Low complexity" evidence="3">
    <location>
        <begin position="597"/>
        <end position="619"/>
    </location>
</feature>
<feature type="compositionally biased region" description="Basic and acidic residues" evidence="3">
    <location>
        <begin position="724"/>
        <end position="733"/>
    </location>
</feature>
<feature type="compositionally biased region" description="Low complexity" evidence="3">
    <location>
        <begin position="765"/>
        <end position="792"/>
    </location>
</feature>
<feature type="compositionally biased region" description="Low complexity" evidence="3">
    <location>
        <begin position="967"/>
        <end position="979"/>
    </location>
</feature>
<feature type="compositionally biased region" description="Gly residues" evidence="3">
    <location>
        <begin position="1016"/>
        <end position="1025"/>
    </location>
</feature>
<feature type="compositionally biased region" description="Low complexity" evidence="3">
    <location>
        <begin position="1116"/>
        <end position="1126"/>
    </location>
</feature>
<feature type="compositionally biased region" description="Low complexity" evidence="3">
    <location>
        <begin position="1141"/>
        <end position="1152"/>
    </location>
</feature>
<feature type="compositionally biased region" description="Gly residues" evidence="3">
    <location>
        <begin position="1190"/>
        <end position="1199"/>
    </location>
</feature>
<feature type="compositionally biased region" description="Pro residues" evidence="3">
    <location>
        <begin position="1213"/>
        <end position="1222"/>
    </location>
</feature>
<feature type="compositionally biased region" description="Low complexity" evidence="3">
    <location>
        <begin position="1234"/>
        <end position="1243"/>
    </location>
</feature>
<feature type="compositionally biased region" description="Basic and acidic residues" evidence="3">
    <location>
        <begin position="1318"/>
        <end position="1330"/>
    </location>
</feature>
<feature type="compositionally biased region" description="Low complexity" evidence="3">
    <location>
        <begin position="1405"/>
        <end position="1416"/>
    </location>
</feature>
<feature type="compositionally biased region" description="Pro residues" evidence="3">
    <location>
        <begin position="1429"/>
        <end position="1443"/>
    </location>
</feature>
<feature type="compositionally biased region" description="Low complexity" evidence="3">
    <location>
        <begin position="1458"/>
        <end position="1479"/>
    </location>
</feature>
<feature type="glycosylation site" description="N-linked (GlcNAc...) asparagine" evidence="5">
    <location>
        <position position="102"/>
    </location>
</feature>
<feature type="glycosylation site" description="N-linked (GlcNAc...) asparagine" evidence="5">
    <location>
        <position position="141"/>
    </location>
</feature>
<feature type="glycosylation site" description="O-linked (Xyl...) (chondroitin sulfate) serine" evidence="6 7">
    <location>
        <position position="349"/>
    </location>
</feature>
<feature type="disulfide bond" description="Interchain" evidence="2">
    <location>
        <position position="1544"/>
    </location>
</feature>
<feature type="disulfide bond" description="Interchain" evidence="2">
    <location>
        <position position="1567"/>
    </location>
</feature>
<feature type="disulfide bond" description="Interchain" evidence="2">
    <location>
        <position position="1576"/>
    </location>
</feature>
<feature type="disulfide bond" evidence="2">
    <location>
        <begin position="1585"/>
        <end position="1742"/>
    </location>
</feature>
<feature type="disulfide bond" evidence="2">
    <location>
        <begin position="1651"/>
        <end position="1696"/>
    </location>
</feature>
<feature type="sequence variant" id="VAR_020015" description="In dbSNP:rs2303098.">
    <original>R</original>
    <variation>H</variation>
    <location>
        <position position="134"/>
    </location>
</feature>
<feature type="sequence variant" id="VAR_060789" description="In dbSNP:rs2287803." evidence="4">
    <original>R</original>
    <variation>G</variation>
    <location>
        <position position="322"/>
    </location>
</feature>
<feature type="sequence variant" id="VAR_055678" description="In dbSNP:rs2161468.">
    <original>R</original>
    <variation>P</variation>
    <location>
        <position position="1042"/>
    </location>
</feature>
<feature type="sequence variant" id="VAR_020016" description="In dbSNP:rs2287813.">
    <original>R</original>
    <variation>P</variation>
    <location>
        <position position="1207"/>
    </location>
</feature>
<feature type="sequence variant" id="VAR_020017" description="In dbSNP:rs3815746.">
    <original>V</original>
    <variation>M</variation>
    <location>
        <position position="1428"/>
    </location>
</feature>
<feature type="sequence variant" id="VAR_055679" description="In dbSNP:rs3745584.">
    <original>A</original>
    <variation>P</variation>
    <location>
        <position position="1488"/>
    </location>
</feature>
<feature type="sequence variant" id="VAR_020018" description="In dbSNP:rs3745581.">
    <original>I</original>
    <variation>M</variation>
    <location>
        <position position="1594"/>
    </location>
</feature>
<feature type="sequence variant" id="VAR_020019" description="In dbSNP:rs2277969.">
    <original>V</original>
    <variation>I</variation>
    <location>
        <position position="1691"/>
    </location>
</feature>
<feature type="sequence conflict" description="In Ref. 1; AAF59902." evidence="8" ref="1">
    <original>A</original>
    <variation>T</variation>
    <location>
        <position position="1687"/>
    </location>
</feature>
<comment type="function">
    <text>Type V collagen is a member of group I collagen (fibrillar forming collagen). It is a minor connective tissue component of nearly ubiquitous distribution. Type V collagen binds to DNA, heparan sulfate, thrombospondin, heparin, and insulin.</text>
</comment>
<comment type="subunit">
    <text>Trimers of two alpha 1(V) and one alpha 2(V) chains in most tissues and trimers of one alpha 1(V), one alpha 2(V), and one alpha 3(V) chains in placenta.</text>
</comment>
<comment type="subcellular location">
    <subcellularLocation>
        <location evidence="2">Secreted</location>
        <location evidence="2">Extracellular space</location>
        <location evidence="2">Extracellular matrix</location>
    </subcellularLocation>
    <subcellularLocation>
        <location evidence="7">Secreted</location>
    </subcellularLocation>
</comment>
<comment type="tissue specificity">
    <text evidence="6 7">Detected in fibroblasts (at protein level) (PubMed:36213313). Detected in urine (at protein level) (PubMed:37453717).</text>
</comment>
<comment type="PTM">
    <text>Prolines at the third position of the tripeptide repeating unit (G-X-Y) are hydroxylated in some or all of the chains.</text>
</comment>
<comment type="similarity">
    <text evidence="2">Belongs to the fibrillar collagen family.</text>
</comment>
<dbReference type="EMBL" id="AF177941">
    <property type="protein sequence ID" value="AAF59902.1"/>
    <property type="molecule type" value="mRNA"/>
</dbReference>
<dbReference type="EMBL" id="AC008742">
    <property type="status" value="NOT_ANNOTATED_CDS"/>
    <property type="molecule type" value="Genomic_DNA"/>
</dbReference>
<dbReference type="CCDS" id="CCDS12222.1"/>
<dbReference type="PIR" id="S20375">
    <property type="entry name" value="S20375"/>
</dbReference>
<dbReference type="RefSeq" id="NP_056534.2">
    <property type="nucleotide sequence ID" value="NM_015719.4"/>
</dbReference>
<dbReference type="SMR" id="P25940"/>
<dbReference type="BioGRID" id="119080">
    <property type="interactions" value="7"/>
</dbReference>
<dbReference type="ComplexPortal" id="CPX-1728">
    <property type="entry name" value="Collagen type V trimer variant 2"/>
</dbReference>
<dbReference type="FunCoup" id="P25940">
    <property type="interactions" value="121"/>
</dbReference>
<dbReference type="IntAct" id="P25940">
    <property type="interactions" value="1"/>
</dbReference>
<dbReference type="MINT" id="P25940"/>
<dbReference type="STRING" id="9606.ENSP00000264828"/>
<dbReference type="ChEMBL" id="CHEMBL2364188"/>
<dbReference type="GlyConnect" id="1138">
    <property type="glycosylation" value="2 N-Linked glycans (1 site)"/>
</dbReference>
<dbReference type="GlyCosmos" id="P25940">
    <property type="glycosylation" value="6 sites, 3 glycans"/>
</dbReference>
<dbReference type="GlyGen" id="P25940">
    <property type="glycosylation" value="14 sites, 8 N-linked glycans (3 sites), 1 O-linked glycan (4 sites)"/>
</dbReference>
<dbReference type="iPTMnet" id="P25940"/>
<dbReference type="PhosphoSitePlus" id="P25940"/>
<dbReference type="BioMuta" id="COL5A3"/>
<dbReference type="DMDM" id="281185497"/>
<dbReference type="jPOST" id="P25940"/>
<dbReference type="MassIVE" id="P25940"/>
<dbReference type="PaxDb" id="9606-ENSP00000264828"/>
<dbReference type="PeptideAtlas" id="P25940"/>
<dbReference type="ProteomicsDB" id="54301"/>
<dbReference type="Antibodypedia" id="25107">
    <property type="antibodies" value="116 antibodies from 26 providers"/>
</dbReference>
<dbReference type="DNASU" id="50509"/>
<dbReference type="Ensembl" id="ENST00000264828.4">
    <property type="protein sequence ID" value="ENSP00000264828.3"/>
    <property type="gene ID" value="ENSG00000080573.7"/>
</dbReference>
<dbReference type="GeneID" id="50509"/>
<dbReference type="KEGG" id="hsa:50509"/>
<dbReference type="MANE-Select" id="ENST00000264828.4">
    <property type="protein sequence ID" value="ENSP00000264828.3"/>
    <property type="RefSeq nucleotide sequence ID" value="NM_015719.4"/>
    <property type="RefSeq protein sequence ID" value="NP_056534.2"/>
</dbReference>
<dbReference type="UCSC" id="uc002mmq.1">
    <property type="organism name" value="human"/>
</dbReference>
<dbReference type="AGR" id="HGNC:14864"/>
<dbReference type="CTD" id="50509"/>
<dbReference type="DisGeNET" id="50509"/>
<dbReference type="GeneCards" id="COL5A3"/>
<dbReference type="HGNC" id="HGNC:14864">
    <property type="gene designation" value="COL5A3"/>
</dbReference>
<dbReference type="HPA" id="ENSG00000080573">
    <property type="expression patterns" value="Low tissue specificity"/>
</dbReference>
<dbReference type="MalaCards" id="COL5A3"/>
<dbReference type="MIM" id="120216">
    <property type="type" value="gene"/>
</dbReference>
<dbReference type="neXtProt" id="NX_P25940"/>
<dbReference type="OpenTargets" id="ENSG00000080573"/>
<dbReference type="PharmGKB" id="PA26726"/>
<dbReference type="VEuPathDB" id="HostDB:ENSG00000080573"/>
<dbReference type="eggNOG" id="KOG3544">
    <property type="taxonomic scope" value="Eukaryota"/>
</dbReference>
<dbReference type="GeneTree" id="ENSGT00940000162394"/>
<dbReference type="HOGENOM" id="CLU_001074_2_0_1"/>
<dbReference type="InParanoid" id="P25940"/>
<dbReference type="OMA" id="NHGSQGI"/>
<dbReference type="OrthoDB" id="8939548at2759"/>
<dbReference type="PAN-GO" id="P25940">
    <property type="GO annotations" value="4 GO annotations based on evolutionary models"/>
</dbReference>
<dbReference type="PhylomeDB" id="P25940"/>
<dbReference type="TreeFam" id="TF323987"/>
<dbReference type="PathwayCommons" id="P25940"/>
<dbReference type="Reactome" id="R-HSA-1442490">
    <property type="pathway name" value="Collagen degradation"/>
</dbReference>
<dbReference type="Reactome" id="R-HSA-1474244">
    <property type="pathway name" value="Extracellular matrix organization"/>
</dbReference>
<dbReference type="Reactome" id="R-HSA-1650814">
    <property type="pathway name" value="Collagen biosynthesis and modifying enzymes"/>
</dbReference>
<dbReference type="Reactome" id="R-HSA-186797">
    <property type="pathway name" value="Signaling by PDGF"/>
</dbReference>
<dbReference type="Reactome" id="R-HSA-2022090">
    <property type="pathway name" value="Assembly of collagen fibrils and other multimeric structures"/>
</dbReference>
<dbReference type="Reactome" id="R-HSA-216083">
    <property type="pathway name" value="Integrin cell surface interactions"/>
</dbReference>
<dbReference type="Reactome" id="R-HSA-3000170">
    <property type="pathway name" value="Syndecan interactions"/>
</dbReference>
<dbReference type="Reactome" id="R-HSA-3000171">
    <property type="pathway name" value="Non-integrin membrane-ECM interactions"/>
</dbReference>
<dbReference type="Reactome" id="R-HSA-3000178">
    <property type="pathway name" value="ECM proteoglycans"/>
</dbReference>
<dbReference type="Reactome" id="R-HSA-419037">
    <property type="pathway name" value="NCAM1 interactions"/>
</dbReference>
<dbReference type="Reactome" id="R-HSA-8874081">
    <property type="pathway name" value="MET activates PTK2 signaling"/>
</dbReference>
<dbReference type="Reactome" id="R-HSA-8948216">
    <property type="pathway name" value="Collagen chain trimerization"/>
</dbReference>
<dbReference type="SignaLink" id="P25940"/>
<dbReference type="BioGRID-ORCS" id="50509">
    <property type="hits" value="13 hits in 1142 CRISPR screens"/>
</dbReference>
<dbReference type="ChiTaRS" id="COL5A3">
    <property type="organism name" value="human"/>
</dbReference>
<dbReference type="GeneWiki" id="COL5A3"/>
<dbReference type="GenomeRNAi" id="50509"/>
<dbReference type="Pharos" id="P25940">
    <property type="development level" value="Tbio"/>
</dbReference>
<dbReference type="PRO" id="PR:P25940"/>
<dbReference type="Proteomes" id="UP000005640">
    <property type="component" value="Chromosome 19"/>
</dbReference>
<dbReference type="RNAct" id="P25940">
    <property type="molecule type" value="protein"/>
</dbReference>
<dbReference type="Bgee" id="ENSG00000080573">
    <property type="expression patterns" value="Expressed in sural nerve and 167 other cell types or tissues"/>
</dbReference>
<dbReference type="GO" id="GO:0005588">
    <property type="term" value="C:collagen type V trimer"/>
    <property type="evidence" value="ECO:0000303"/>
    <property type="project" value="UniProtKB"/>
</dbReference>
<dbReference type="GO" id="GO:0062023">
    <property type="term" value="C:collagen-containing extracellular matrix"/>
    <property type="evidence" value="ECO:0007005"/>
    <property type="project" value="BHF-UCL"/>
</dbReference>
<dbReference type="GO" id="GO:0005788">
    <property type="term" value="C:endoplasmic reticulum lumen"/>
    <property type="evidence" value="ECO:0000304"/>
    <property type="project" value="Reactome"/>
</dbReference>
<dbReference type="GO" id="GO:0005576">
    <property type="term" value="C:extracellular region"/>
    <property type="evidence" value="ECO:0000304"/>
    <property type="project" value="Reactome"/>
</dbReference>
<dbReference type="GO" id="GO:0005615">
    <property type="term" value="C:extracellular space"/>
    <property type="evidence" value="ECO:0000318"/>
    <property type="project" value="GO_Central"/>
</dbReference>
<dbReference type="GO" id="GO:0005518">
    <property type="term" value="F:collagen binding"/>
    <property type="evidence" value="ECO:0000303"/>
    <property type="project" value="UniProtKB"/>
</dbReference>
<dbReference type="GO" id="GO:0005201">
    <property type="term" value="F:extracellular matrix structural constituent"/>
    <property type="evidence" value="ECO:0000303"/>
    <property type="project" value="UniProtKB"/>
</dbReference>
<dbReference type="GO" id="GO:0030020">
    <property type="term" value="F:extracellular matrix structural constituent conferring tensile strength"/>
    <property type="evidence" value="ECO:0007005"/>
    <property type="project" value="BHF-UCL"/>
</dbReference>
<dbReference type="GO" id="GO:0008201">
    <property type="term" value="F:heparin binding"/>
    <property type="evidence" value="ECO:0000318"/>
    <property type="project" value="GO_Central"/>
</dbReference>
<dbReference type="GO" id="GO:0043394">
    <property type="term" value="F:proteoglycan binding"/>
    <property type="evidence" value="ECO:0007669"/>
    <property type="project" value="Ensembl"/>
</dbReference>
<dbReference type="GO" id="GO:0007160">
    <property type="term" value="P:cell-matrix adhesion"/>
    <property type="evidence" value="ECO:0007669"/>
    <property type="project" value="Ensembl"/>
</dbReference>
<dbReference type="GO" id="GO:0030199">
    <property type="term" value="P:collagen fibril organization"/>
    <property type="evidence" value="ECO:0000303"/>
    <property type="project" value="UniProtKB"/>
</dbReference>
<dbReference type="GO" id="GO:0043588">
    <property type="term" value="P:skin development"/>
    <property type="evidence" value="ECO:0000303"/>
    <property type="project" value="UniProtKB"/>
</dbReference>
<dbReference type="FunFam" id="2.60.120.1000:FF:000007">
    <property type="entry name" value="Collagen type V alpha 3 chain"/>
    <property type="match status" value="1"/>
</dbReference>
<dbReference type="FunFam" id="2.60.120.200:FF:000136">
    <property type="entry name" value="Collagen type V alpha 3 chain"/>
    <property type="match status" value="1"/>
</dbReference>
<dbReference type="Gene3D" id="2.60.120.1000">
    <property type="match status" value="1"/>
</dbReference>
<dbReference type="Gene3D" id="2.60.120.200">
    <property type="match status" value="1"/>
</dbReference>
<dbReference type="InterPro" id="IPR008160">
    <property type="entry name" value="Collagen"/>
</dbReference>
<dbReference type="InterPro" id="IPR050938">
    <property type="entry name" value="Collagen_Structural_Proteins"/>
</dbReference>
<dbReference type="InterPro" id="IPR013320">
    <property type="entry name" value="ConA-like_dom_sf"/>
</dbReference>
<dbReference type="InterPro" id="IPR000885">
    <property type="entry name" value="Fib_collagen_C"/>
</dbReference>
<dbReference type="InterPro" id="IPR048287">
    <property type="entry name" value="TSPN-like_N"/>
</dbReference>
<dbReference type="PANTHER" id="PTHR37456:SF6">
    <property type="entry name" value="COLLAGEN ALPHA-1(XXIII) CHAIN-LIKE ISOFORM X2"/>
    <property type="match status" value="1"/>
</dbReference>
<dbReference type="PANTHER" id="PTHR37456">
    <property type="entry name" value="SI:CH211-266K2.1"/>
    <property type="match status" value="1"/>
</dbReference>
<dbReference type="Pfam" id="PF01410">
    <property type="entry name" value="COLFI"/>
    <property type="match status" value="1"/>
</dbReference>
<dbReference type="Pfam" id="PF01391">
    <property type="entry name" value="Collagen"/>
    <property type="match status" value="2"/>
</dbReference>
<dbReference type="SMART" id="SM00038">
    <property type="entry name" value="COLFI"/>
    <property type="match status" value="1"/>
</dbReference>
<dbReference type="SMART" id="SM00210">
    <property type="entry name" value="TSPN"/>
    <property type="match status" value="1"/>
</dbReference>
<dbReference type="SUPFAM" id="SSF49899">
    <property type="entry name" value="Concanavalin A-like lectins/glucanases"/>
    <property type="match status" value="1"/>
</dbReference>
<dbReference type="PROSITE" id="PS51461">
    <property type="entry name" value="NC1_FIB"/>
    <property type="match status" value="1"/>
</dbReference>
<name>CO5A3_HUMAN</name>
<sequence>MGNRRDLGQPRAGLCLLLAALQLLPGTQADPVDVLKALGVQGGQAGVPEGPGFCPQRTPEGDRAFRIGQASTLGIPTWELFPEGHFPENFSLLITLRGQPANQSVLLSIYDERGARQLGLALGPALGLLGDPFRPLPQQVNLTDGRWHRVAVSIDGEMVTLVADCEAQPPVLGHGPRFISIAGLTVLGTQDLGEKTFEGDIQELLISPDPQAAFQACERYLPDCDNLAPAATVAPQGEPETPRPRRKGKGKGRKKGRGRKGKGRKKNKEIWTSSPPPDSAENQTSTDIPKTETPAPNLPPTPTPLVVTSTVTTGLNATILERSLDPDSGTELGTLETKAAREDEEGDDSTMGPDFRAAEYPSRTQFQIFPGAGEKGAKGEPAVIEKGQQFEGPPGAPGPQGVVGPSGPPGPPGFPGDPGPPGPAGLPGIPGIDGIRGPPGTVIMMPFQFAGGSFKGPPVSFQQAQAQAVLQQTQLSMKGPPGPVGLTGRPGPVGLPGHPGLKGEEGAEGPQGPRGLQGPHGPPGRVGKMGRPGADGARGLPGDTGPKGDRGFDGLPGLPGEKGQRGDFGHVGQPGPPGEDGERGAEGPPGPTGQAGEPGPRGLLGPRGSPGPTGRPGVTGIDGAPGAKGNVGPPGEPGPPGQQGNHGSQGLPGPQGLIGTPGEKGPPGNPGIPGLPGSDGPLGHPGHEGPTGEKGAQGPPGSAGPPGYPGPRGVKGTSGNRGLQGEKGEKGEDGFPGFKGDVGLKGDQGKPGAPGPRGEDGPEGPKGQAGQAGEEGPPGSAGEKGKLGVPGLPGYPGRPGPKGSIGFPGPLGPIGEKGKSGKTGQPGLEGERGPPGSRGERGQPGATGQPGPKGDVGQDGAPGIPGEKGLPGLQGPPGFPGPKGPPGHQGKDGRPGHPGQRGELGFQGQTGPPGPAGVLGPQGKTGEVGPLGERGPPGPPGPPGEQGLPGLEGREGAKGELGPPGPLGKEGPAGLRGFPGPKGGPGDPGPTGLKGDKGPPGPVGANGSPGERGPLGPAGGIGLPGQSGSEGPVGPAGKKGSRGERGPPGPTGKDGIPGPLGPLGPPGAAGPSGEEGDKGDVGAPGHKGSKGDKGDAGPPGQPGIRGPAGHPGPPGADGAQGRRGPPGLFGQKGDDGVRGFVGVIGPPGLQGLPGPPGEKGEVGDVGSMGPHGAPGPRGPQGPTGSEGTPGLPGGVGQPGAVGEKGERGDAGDPGPPGAPGIPGPKGDIGEKGDSGPSGAAGPPGKKGPPGEDGAKGSVGPTGLPGDLGPPGDPGVSGIDGSPGEKGDPGDVGGPGPPGASGEPGAPGPPGKRGPSGHMGREGREGEKGAKGEPGPDGPPGRTGPMGARGPPGRVGPEGLRGIPGPVGEPGLLGAPGQMGPPGPLGPSGLPGLKGDTGPKGEKGHIGLIGLIGPPGEAGEKGDQGLPGVQGPPGPKGDPGPPGPIGSLGHPGPPGVAGPLGQKGSKGSPGSMGPRGDTGPAGPPGPPGAPAELHGLRRRRRFVPVPLPVVEGGLEEVLASLTSLSLELEQLRRPPGTAERPGLVCHELHRNHPHLPDGEYWIDPNQGCARDSFRVFCNFTAGGETCLYPDKKFEIVKLASWSKEKPGGWYSTFRRGKKFSYVDADGSPVNVVQLNFLKLLSATARQNFTYSCQNAAAWLDEATGDYSHSARFLGTNGEELSFNQTTAATVSVPQDGCRLRKGQTKTLFEFSSSRAGFLPLWDVAATDFGQTNQKFGFELGPVCFSS</sequence>
<organism>
    <name type="scientific">Homo sapiens</name>
    <name type="common">Human</name>
    <dbReference type="NCBI Taxonomy" id="9606"/>
    <lineage>
        <taxon>Eukaryota</taxon>
        <taxon>Metazoa</taxon>
        <taxon>Chordata</taxon>
        <taxon>Craniata</taxon>
        <taxon>Vertebrata</taxon>
        <taxon>Euteleostomi</taxon>
        <taxon>Mammalia</taxon>
        <taxon>Eutheria</taxon>
        <taxon>Euarchontoglires</taxon>
        <taxon>Primates</taxon>
        <taxon>Haplorrhini</taxon>
        <taxon>Catarrhini</taxon>
        <taxon>Hominidae</taxon>
        <taxon>Homo</taxon>
    </lineage>
</organism>